<reference key="1">
    <citation type="journal article" date="1998" name="Biochem. Biophys. Res. Commun.">
        <title>Mouse PRL-2 and PRL-3, two potentially prenylated protein tyrosine phosphatases homologous to PRL-1.</title>
        <authorList>
            <person name="Zeng Q."/>
            <person name="Hong W."/>
            <person name="Tan Y.H."/>
        </authorList>
    </citation>
    <scope>NUCLEOTIDE SEQUENCE [MRNA]</scope>
    <scope>TISSUE SPECIFICITY</scope>
</reference>
<reference key="2">
    <citation type="journal article" date="2004" name="Am. J. Pathol.">
        <title>Phosphatase of regenerating liver-3 promotes motility and metastasis of mouse melanoma cells.</title>
        <authorList>
            <person name="Wu X."/>
            <person name="Zeng H."/>
            <person name="Zhang X."/>
            <person name="Zhao Y."/>
            <person name="Sha H."/>
            <person name="Ge X."/>
            <person name="Zhang M."/>
            <person name="Gao X."/>
            <person name="Xu Q."/>
        </authorList>
    </citation>
    <scope>NUCLEOTIDE SEQUENCE [MRNA]</scope>
    <scope>TISSUE SPECIFICITY</scope>
    <scope>SUBCELLULAR LOCATION</scope>
    <scope>ACTIVITY REGULATION</scope>
    <scope>MUTAGENESIS OF ASP-72 AND CYS-104</scope>
    <scope>FUNCTION</scope>
    <source>
        <strain>C57BL/6J</strain>
        <tissue>Heart</tissue>
    </source>
</reference>
<reference key="3">
    <citation type="journal article" date="2005" name="Science">
        <title>The transcriptional landscape of the mammalian genome.</title>
        <authorList>
            <person name="Carninci P."/>
            <person name="Kasukawa T."/>
            <person name="Katayama S."/>
            <person name="Gough J."/>
            <person name="Frith M.C."/>
            <person name="Maeda N."/>
            <person name="Oyama R."/>
            <person name="Ravasi T."/>
            <person name="Lenhard B."/>
            <person name="Wells C."/>
            <person name="Kodzius R."/>
            <person name="Shimokawa K."/>
            <person name="Bajic V.B."/>
            <person name="Brenner S.E."/>
            <person name="Batalov S."/>
            <person name="Forrest A.R."/>
            <person name="Zavolan M."/>
            <person name="Davis M.J."/>
            <person name="Wilming L.G."/>
            <person name="Aidinis V."/>
            <person name="Allen J.E."/>
            <person name="Ambesi-Impiombato A."/>
            <person name="Apweiler R."/>
            <person name="Aturaliya R.N."/>
            <person name="Bailey T.L."/>
            <person name="Bansal M."/>
            <person name="Baxter L."/>
            <person name="Beisel K.W."/>
            <person name="Bersano T."/>
            <person name="Bono H."/>
            <person name="Chalk A.M."/>
            <person name="Chiu K.P."/>
            <person name="Choudhary V."/>
            <person name="Christoffels A."/>
            <person name="Clutterbuck D.R."/>
            <person name="Crowe M.L."/>
            <person name="Dalla E."/>
            <person name="Dalrymple B.P."/>
            <person name="de Bono B."/>
            <person name="Della Gatta G."/>
            <person name="di Bernardo D."/>
            <person name="Down T."/>
            <person name="Engstrom P."/>
            <person name="Fagiolini M."/>
            <person name="Faulkner G."/>
            <person name="Fletcher C.F."/>
            <person name="Fukushima T."/>
            <person name="Furuno M."/>
            <person name="Futaki S."/>
            <person name="Gariboldi M."/>
            <person name="Georgii-Hemming P."/>
            <person name="Gingeras T.R."/>
            <person name="Gojobori T."/>
            <person name="Green R.E."/>
            <person name="Gustincich S."/>
            <person name="Harbers M."/>
            <person name="Hayashi Y."/>
            <person name="Hensch T.K."/>
            <person name="Hirokawa N."/>
            <person name="Hill D."/>
            <person name="Huminiecki L."/>
            <person name="Iacono M."/>
            <person name="Ikeo K."/>
            <person name="Iwama A."/>
            <person name="Ishikawa T."/>
            <person name="Jakt M."/>
            <person name="Kanapin A."/>
            <person name="Katoh M."/>
            <person name="Kawasawa Y."/>
            <person name="Kelso J."/>
            <person name="Kitamura H."/>
            <person name="Kitano H."/>
            <person name="Kollias G."/>
            <person name="Krishnan S.P."/>
            <person name="Kruger A."/>
            <person name="Kummerfeld S.K."/>
            <person name="Kurochkin I.V."/>
            <person name="Lareau L.F."/>
            <person name="Lazarevic D."/>
            <person name="Lipovich L."/>
            <person name="Liu J."/>
            <person name="Liuni S."/>
            <person name="McWilliam S."/>
            <person name="Madan Babu M."/>
            <person name="Madera M."/>
            <person name="Marchionni L."/>
            <person name="Matsuda H."/>
            <person name="Matsuzawa S."/>
            <person name="Miki H."/>
            <person name="Mignone F."/>
            <person name="Miyake S."/>
            <person name="Morris K."/>
            <person name="Mottagui-Tabar S."/>
            <person name="Mulder N."/>
            <person name="Nakano N."/>
            <person name="Nakauchi H."/>
            <person name="Ng P."/>
            <person name="Nilsson R."/>
            <person name="Nishiguchi S."/>
            <person name="Nishikawa S."/>
            <person name="Nori F."/>
            <person name="Ohara O."/>
            <person name="Okazaki Y."/>
            <person name="Orlando V."/>
            <person name="Pang K.C."/>
            <person name="Pavan W.J."/>
            <person name="Pavesi G."/>
            <person name="Pesole G."/>
            <person name="Petrovsky N."/>
            <person name="Piazza S."/>
            <person name="Reed J."/>
            <person name="Reid J.F."/>
            <person name="Ring B.Z."/>
            <person name="Ringwald M."/>
            <person name="Rost B."/>
            <person name="Ruan Y."/>
            <person name="Salzberg S.L."/>
            <person name="Sandelin A."/>
            <person name="Schneider C."/>
            <person name="Schoenbach C."/>
            <person name="Sekiguchi K."/>
            <person name="Semple C.A."/>
            <person name="Seno S."/>
            <person name="Sessa L."/>
            <person name="Sheng Y."/>
            <person name="Shibata Y."/>
            <person name="Shimada H."/>
            <person name="Shimada K."/>
            <person name="Silva D."/>
            <person name="Sinclair B."/>
            <person name="Sperling S."/>
            <person name="Stupka E."/>
            <person name="Sugiura K."/>
            <person name="Sultana R."/>
            <person name="Takenaka Y."/>
            <person name="Taki K."/>
            <person name="Tammoja K."/>
            <person name="Tan S.L."/>
            <person name="Tang S."/>
            <person name="Taylor M.S."/>
            <person name="Tegner J."/>
            <person name="Teichmann S.A."/>
            <person name="Ueda H.R."/>
            <person name="van Nimwegen E."/>
            <person name="Verardo R."/>
            <person name="Wei C.L."/>
            <person name="Yagi K."/>
            <person name="Yamanishi H."/>
            <person name="Zabarovsky E."/>
            <person name="Zhu S."/>
            <person name="Zimmer A."/>
            <person name="Hide W."/>
            <person name="Bult C."/>
            <person name="Grimmond S.M."/>
            <person name="Teasdale R.D."/>
            <person name="Liu E.T."/>
            <person name="Brusic V."/>
            <person name="Quackenbush J."/>
            <person name="Wahlestedt C."/>
            <person name="Mattick J.S."/>
            <person name="Hume D.A."/>
            <person name="Kai C."/>
            <person name="Sasaki D."/>
            <person name="Tomaru Y."/>
            <person name="Fukuda S."/>
            <person name="Kanamori-Katayama M."/>
            <person name="Suzuki M."/>
            <person name="Aoki J."/>
            <person name="Arakawa T."/>
            <person name="Iida J."/>
            <person name="Imamura K."/>
            <person name="Itoh M."/>
            <person name="Kato T."/>
            <person name="Kawaji H."/>
            <person name="Kawagashira N."/>
            <person name="Kawashima T."/>
            <person name="Kojima M."/>
            <person name="Kondo S."/>
            <person name="Konno H."/>
            <person name="Nakano K."/>
            <person name="Ninomiya N."/>
            <person name="Nishio T."/>
            <person name="Okada M."/>
            <person name="Plessy C."/>
            <person name="Shibata K."/>
            <person name="Shiraki T."/>
            <person name="Suzuki S."/>
            <person name="Tagami M."/>
            <person name="Waki K."/>
            <person name="Watahiki A."/>
            <person name="Okamura-Oho Y."/>
            <person name="Suzuki H."/>
            <person name="Kawai J."/>
            <person name="Hayashizaki Y."/>
        </authorList>
    </citation>
    <scope>NUCLEOTIDE SEQUENCE [LARGE SCALE MRNA]</scope>
    <source>
        <strain>C57BL/6J</strain>
        <strain>NOD</strain>
        <tissue>Embryo</tissue>
        <tissue>Skin</tissue>
        <tissue>Spleen</tissue>
    </source>
</reference>
<reference key="4">
    <citation type="journal article" date="2004" name="Genome Res.">
        <title>The status, quality, and expansion of the NIH full-length cDNA project: the Mammalian Gene Collection (MGC).</title>
        <authorList>
            <consortium name="The MGC Project Team"/>
        </authorList>
    </citation>
    <scope>NUCLEOTIDE SEQUENCE [LARGE SCALE MRNA]</scope>
    <source>
        <strain>C57BL/6J</strain>
        <tissue>Brain</tissue>
        <tissue>Eye</tissue>
    </source>
</reference>
<reference key="5">
    <citation type="journal article" date="2000" name="J. Biol. Chem.">
        <title>Prenylation-dependent association of protein-tyrosine phosphatases PRL-1, -2, and -3 with the plasma membrane and the early endosome.</title>
        <authorList>
            <person name="Zeng Q."/>
            <person name="Si X."/>
            <person name="Horstmann H."/>
            <person name="Xu Y."/>
            <person name="Hong W."/>
            <person name="Pallen C.J."/>
        </authorList>
    </citation>
    <scope>ISOPRENYLATION AT CYS-170</scope>
    <scope>SUBCELLULAR LOCATION</scope>
</reference>
<reference key="6">
    <citation type="journal article" date="2005" name="Eur. J. Neurosci.">
        <title>Denervation-induced alterations in gene expression in mouse skeletal muscle.</title>
        <authorList>
            <person name="Magnusson C."/>
            <person name="Svensson A."/>
            <person name="Christerson U."/>
            <person name="Taagerud S."/>
        </authorList>
    </citation>
    <scope>INDUCTION</scope>
</reference>
<reference key="7">
    <citation type="journal article" date="2010" name="Cell">
        <title>A tissue-specific atlas of mouse protein phosphorylation and expression.</title>
        <authorList>
            <person name="Huttlin E.L."/>
            <person name="Jedrychowski M.P."/>
            <person name="Elias J.E."/>
            <person name="Goswami T."/>
            <person name="Rad R."/>
            <person name="Beausoleil S.A."/>
            <person name="Villen J."/>
            <person name="Haas W."/>
            <person name="Sowa M.E."/>
            <person name="Gygi S.P."/>
        </authorList>
    </citation>
    <scope>IDENTIFICATION BY MASS SPECTROMETRY [LARGE SCALE ANALYSIS]</scope>
    <source>
        <tissue>Brain</tissue>
        <tissue>Spleen</tissue>
    </source>
</reference>
<protein>
    <recommendedName>
        <fullName>Protein tyrosine phosphatase type IVA 3</fullName>
        <ecNumber>3.1.3.48</ecNumber>
    </recommendedName>
    <alternativeName>
        <fullName>Protein-tyrosine phosphatase 4a3</fullName>
    </alternativeName>
    <alternativeName>
        <fullName>Protein-tyrosine phosphatase of regenerating liver 3</fullName>
        <shortName>PRL-3</shortName>
    </alternativeName>
</protein>
<keyword id="KW-1003">Cell membrane</keyword>
<keyword id="KW-1015">Disulfide bond</keyword>
<keyword id="KW-0967">Endosome</keyword>
<keyword id="KW-0378">Hydrolase</keyword>
<keyword id="KW-0449">Lipoprotein</keyword>
<keyword id="KW-0472">Membrane</keyword>
<keyword id="KW-0488">Methylation</keyword>
<keyword id="KW-0636">Prenylation</keyword>
<keyword id="KW-0904">Protein phosphatase</keyword>
<keyword id="KW-0656">Proto-oncogene</keyword>
<keyword id="KW-1185">Reference proteome</keyword>
<organism>
    <name type="scientific">Mus musculus</name>
    <name type="common">Mouse</name>
    <dbReference type="NCBI Taxonomy" id="10090"/>
    <lineage>
        <taxon>Eukaryota</taxon>
        <taxon>Metazoa</taxon>
        <taxon>Chordata</taxon>
        <taxon>Craniata</taxon>
        <taxon>Vertebrata</taxon>
        <taxon>Euteleostomi</taxon>
        <taxon>Mammalia</taxon>
        <taxon>Eutheria</taxon>
        <taxon>Euarchontoglires</taxon>
        <taxon>Glires</taxon>
        <taxon>Rodentia</taxon>
        <taxon>Myomorpha</taxon>
        <taxon>Muroidea</taxon>
        <taxon>Muridae</taxon>
        <taxon>Murinae</taxon>
        <taxon>Mus</taxon>
        <taxon>Mus</taxon>
    </lineage>
</organism>
<feature type="chain" id="PRO_0000094789" description="Protein tyrosine phosphatase type IVA 3">
    <location>
        <begin position="1"/>
        <end position="170"/>
    </location>
</feature>
<feature type="propeptide" id="PRO_0000396655" description="Removed in mature form" evidence="1">
    <location>
        <begin position="171"/>
        <end position="173"/>
    </location>
</feature>
<feature type="domain" description="Tyrosine-protein phosphatase" evidence="2">
    <location>
        <begin position="8"/>
        <end position="161"/>
    </location>
</feature>
<feature type="active site" description="Proton donor" evidence="1">
    <location>
        <position position="72"/>
    </location>
</feature>
<feature type="active site" description="Phosphocysteine intermediate" evidence="2">
    <location>
        <position position="104"/>
    </location>
</feature>
<feature type="binding site" evidence="1">
    <location>
        <position position="110"/>
    </location>
    <ligand>
        <name>substrate</name>
    </ligand>
</feature>
<feature type="modified residue" description="Cysteine methyl ester" evidence="1">
    <location>
        <position position="170"/>
    </location>
</feature>
<feature type="lipid moiety-binding region" description="S-farnesyl cysteine" evidence="1">
    <location>
        <position position="170"/>
    </location>
</feature>
<feature type="disulfide bond" evidence="1">
    <location>
        <begin position="49"/>
        <end position="104"/>
    </location>
</feature>
<feature type="mutagenesis site" description="Loss of enzymatic activity; reduced migration-promoting activity." evidence="3">
    <original>D</original>
    <variation>A</variation>
    <location>
        <position position="72"/>
    </location>
</feature>
<feature type="mutagenesis site" description="Loss of enzymatic activity; reduced migration-promoting activity." evidence="3">
    <original>C</original>
    <variation>S</variation>
    <location>
        <position position="104"/>
    </location>
</feature>
<feature type="sequence conflict" description="In Ref. 1 and 2." evidence="6" ref="1 2">
    <original>A</original>
    <variation>L</variation>
    <location>
        <position position="101"/>
    </location>
</feature>
<sequence length="173" mass="19652">MARMNRPAPVEVSYRHMRFLITHNPSNATLSTFIEDLKKYGATTVVRVCEVTYDKTPLEKDGITVVDWPFDDGAPPPGKVVEDWLSLLKAKFYNDPGSCVAVHCVAGLGRAPVLVALALIESGMKYEDAIQFIRQKRRGAINSKQLTYLEKYRPKQRLRFKDPHTHKTRCCVM</sequence>
<name>TP4A3_MOUSE</name>
<accession>Q9D658</accession>
<accession>O70275</accession>
<accession>Q3T9Z5</accession>
<accession>Q9CTC8</accession>
<gene>
    <name type="primary">Ptp4a3</name>
    <name type="synonym">Prl3</name>
</gene>
<comment type="function">
    <text evidence="3">Protein tyrosine phosphatase which stimulates progression from G1 into S phase during mitosis. Enhances cell proliferation, cell motility and invasive activity, and promotes cancer metastasis. May be involved in the progression of cardiac hypertrophy by inhibiting intracellular calcium mobilization in response to angiotensin II.</text>
</comment>
<comment type="catalytic activity">
    <reaction>
        <text>O-phospho-L-tyrosyl-[protein] + H2O = L-tyrosyl-[protein] + phosphate</text>
        <dbReference type="Rhea" id="RHEA:10684"/>
        <dbReference type="Rhea" id="RHEA-COMP:10136"/>
        <dbReference type="Rhea" id="RHEA-COMP:20101"/>
        <dbReference type="ChEBI" id="CHEBI:15377"/>
        <dbReference type="ChEBI" id="CHEBI:43474"/>
        <dbReference type="ChEBI" id="CHEBI:46858"/>
        <dbReference type="ChEBI" id="CHEBI:61978"/>
        <dbReference type="EC" id="3.1.3.48"/>
    </reaction>
</comment>
<comment type="activity regulation">
    <text evidence="3">Inhibited by sodium orthovanadate and peroxovanadium compounds, and by pentamidine.</text>
</comment>
<comment type="subunit">
    <text evidence="1">Interacts with tubulin.</text>
</comment>
<comment type="subcellular location">
    <subcellularLocation>
        <location>Cell membrane</location>
    </subcellularLocation>
    <subcellularLocation>
        <location>Early endosome</location>
    </subcellularLocation>
</comment>
<comment type="tissue specificity">
    <text evidence="3 5">Present in the small intestine, where it is located in the differentiated epithelial cells of the villus but not in the proliferating crypt cells (at protein level). Expressed in heart and skeletal muscle, and at lower levels in lung, spleen and testis.</text>
</comment>
<comment type="induction">
    <text evidence="4">Down-regulated upon skeletal muscle denervation.</text>
</comment>
<comment type="PTM">
    <text>Farnesylated. Farnesylation is required for membrane targeting. Unfarnesylated forms are shifted into the nucleus.</text>
</comment>
<comment type="similarity">
    <text evidence="6">Belongs to the protein-tyrosine phosphatase family.</text>
</comment>
<evidence type="ECO:0000250" key="1"/>
<evidence type="ECO:0000255" key="2">
    <source>
        <dbReference type="PROSITE-ProRule" id="PRU00160"/>
    </source>
</evidence>
<evidence type="ECO:0000269" key="3">
    <source>
    </source>
</evidence>
<evidence type="ECO:0000269" key="4">
    <source>
    </source>
</evidence>
<evidence type="ECO:0000269" key="5">
    <source>
    </source>
</evidence>
<evidence type="ECO:0000305" key="6"/>
<dbReference type="EC" id="3.1.3.48"/>
<dbReference type="EMBL" id="AF035645">
    <property type="protein sequence ID" value="AAC15875.1"/>
    <property type="molecule type" value="mRNA"/>
</dbReference>
<dbReference type="EMBL" id="AK003954">
    <property type="protein sequence ID" value="BAB23091.1"/>
    <property type="molecule type" value="mRNA"/>
</dbReference>
<dbReference type="EMBL" id="AK014601">
    <property type="protein sequence ID" value="BAB29456.1"/>
    <property type="molecule type" value="mRNA"/>
</dbReference>
<dbReference type="EMBL" id="AK143702">
    <property type="protein sequence ID" value="BAE25506.1"/>
    <property type="molecule type" value="mRNA"/>
</dbReference>
<dbReference type="EMBL" id="AK172192">
    <property type="protein sequence ID" value="BAE42875.1"/>
    <property type="molecule type" value="mRNA"/>
</dbReference>
<dbReference type="EMBL" id="BC027445">
    <property type="protein sequence ID" value="AAH27445.1"/>
    <property type="molecule type" value="mRNA"/>
</dbReference>
<dbReference type="EMBL" id="BC066043">
    <property type="protein sequence ID" value="AAH66043.1"/>
    <property type="molecule type" value="mRNA"/>
</dbReference>
<dbReference type="CCDS" id="CCDS27519.1"/>
<dbReference type="PIR" id="JC5982">
    <property type="entry name" value="JC5982"/>
</dbReference>
<dbReference type="RefSeq" id="NP_001159860.1">
    <property type="nucleotide sequence ID" value="NM_001166388.2"/>
</dbReference>
<dbReference type="RefSeq" id="NP_001159861.1">
    <property type="nucleotide sequence ID" value="NM_001166389.2"/>
</dbReference>
<dbReference type="RefSeq" id="NP_001159862.1">
    <property type="nucleotide sequence ID" value="NM_001166390.1"/>
</dbReference>
<dbReference type="RefSeq" id="NP_001344520.1">
    <property type="nucleotide sequence ID" value="NM_001357591.2"/>
</dbReference>
<dbReference type="RefSeq" id="NP_001398625.1">
    <property type="nucleotide sequence ID" value="NM_001411696.1"/>
</dbReference>
<dbReference type="RefSeq" id="NP_001398626.1">
    <property type="nucleotide sequence ID" value="NM_001411697.1"/>
</dbReference>
<dbReference type="RefSeq" id="NP_001398627.1">
    <property type="nucleotide sequence ID" value="NM_001411698.1"/>
</dbReference>
<dbReference type="RefSeq" id="NP_001398628.1">
    <property type="nucleotide sequence ID" value="NM_001411699.1"/>
</dbReference>
<dbReference type="RefSeq" id="NP_001398629.1">
    <property type="nucleotide sequence ID" value="NM_001411700.1"/>
</dbReference>
<dbReference type="RefSeq" id="NP_033001.2">
    <property type="nucleotide sequence ID" value="NM_008975.3"/>
</dbReference>
<dbReference type="RefSeq" id="XP_006520703.1">
    <property type="nucleotide sequence ID" value="XM_006520640.3"/>
</dbReference>
<dbReference type="RefSeq" id="XP_006520705.1">
    <property type="nucleotide sequence ID" value="XM_006520642.1"/>
</dbReference>
<dbReference type="RefSeq" id="XP_011243825.1">
    <property type="nucleotide sequence ID" value="XM_011245523.1"/>
</dbReference>
<dbReference type="SMR" id="Q9D658"/>
<dbReference type="FunCoup" id="Q9D658">
    <property type="interactions" value="1738"/>
</dbReference>
<dbReference type="STRING" id="10090.ENSMUSP00000132097"/>
<dbReference type="ChEMBL" id="CHEMBL4523445"/>
<dbReference type="iPTMnet" id="Q9D658"/>
<dbReference type="PhosphoSitePlus" id="Q9D658"/>
<dbReference type="SwissPalm" id="Q9D658"/>
<dbReference type="PaxDb" id="10090-ENSMUSP00000131281"/>
<dbReference type="ProteomicsDB" id="259160"/>
<dbReference type="Antibodypedia" id="27728">
    <property type="antibodies" value="365 antibodies from 35 providers"/>
</dbReference>
<dbReference type="DNASU" id="19245"/>
<dbReference type="Ensembl" id="ENSMUST00000053232.8">
    <property type="protein sequence ID" value="ENSMUSP00000060956.7"/>
    <property type="gene ID" value="ENSMUSG00000059895.14"/>
</dbReference>
<dbReference type="Ensembl" id="ENSMUST00000163582.9">
    <property type="protein sequence ID" value="ENSMUSP00000131281.2"/>
    <property type="gene ID" value="ENSMUSG00000059895.14"/>
</dbReference>
<dbReference type="Ensembl" id="ENSMUST00000165541.8">
    <property type="protein sequence ID" value="ENSMUSP00000132097.2"/>
    <property type="gene ID" value="ENSMUSG00000059895.14"/>
</dbReference>
<dbReference type="Ensembl" id="ENSMUST00000230177.2">
    <property type="protein sequence ID" value="ENSMUSP00000154829.2"/>
    <property type="gene ID" value="ENSMUSG00000059895.14"/>
</dbReference>
<dbReference type="GeneID" id="19245"/>
<dbReference type="KEGG" id="mmu:19245"/>
<dbReference type="UCSC" id="uc007wcj.1">
    <property type="organism name" value="mouse"/>
</dbReference>
<dbReference type="AGR" id="MGI:1277098"/>
<dbReference type="CTD" id="11156"/>
<dbReference type="MGI" id="MGI:1277098">
    <property type="gene designation" value="Ptp4a3"/>
</dbReference>
<dbReference type="VEuPathDB" id="HostDB:ENSMUSG00000059895"/>
<dbReference type="eggNOG" id="KOG2836">
    <property type="taxonomic scope" value="Eukaryota"/>
</dbReference>
<dbReference type="GeneTree" id="ENSGT00940000159581"/>
<dbReference type="HOGENOM" id="CLU_099263_1_0_1"/>
<dbReference type="InParanoid" id="Q9D658"/>
<dbReference type="OMA" id="MARMIRP"/>
<dbReference type="PhylomeDB" id="Q9D658"/>
<dbReference type="TreeFam" id="TF313384"/>
<dbReference type="BioGRID-ORCS" id="19245">
    <property type="hits" value="1 hit in 78 CRISPR screens"/>
</dbReference>
<dbReference type="PRO" id="PR:Q9D658"/>
<dbReference type="Proteomes" id="UP000000589">
    <property type="component" value="Chromosome 15"/>
</dbReference>
<dbReference type="RNAct" id="Q9D658">
    <property type="molecule type" value="protein"/>
</dbReference>
<dbReference type="Bgee" id="ENSMUSG00000059895">
    <property type="expression patterns" value="Expressed in hindlimb stylopod muscle and 270 other cell types or tissues"/>
</dbReference>
<dbReference type="ExpressionAtlas" id="Q9D658">
    <property type="expression patterns" value="baseline and differential"/>
</dbReference>
<dbReference type="GO" id="GO:0005769">
    <property type="term" value="C:early endosome"/>
    <property type="evidence" value="ECO:0007669"/>
    <property type="project" value="UniProtKB-SubCell"/>
</dbReference>
<dbReference type="GO" id="GO:0005634">
    <property type="term" value="C:nucleus"/>
    <property type="evidence" value="ECO:0007669"/>
    <property type="project" value="Ensembl"/>
</dbReference>
<dbReference type="GO" id="GO:0005886">
    <property type="term" value="C:plasma membrane"/>
    <property type="evidence" value="ECO:0007669"/>
    <property type="project" value="UniProtKB-SubCell"/>
</dbReference>
<dbReference type="GO" id="GO:0004725">
    <property type="term" value="F:protein tyrosine phosphatase activity"/>
    <property type="evidence" value="ECO:0007669"/>
    <property type="project" value="UniProtKB-EC"/>
</dbReference>
<dbReference type="GO" id="GO:1990830">
    <property type="term" value="P:cellular response to leukemia inhibitory factor"/>
    <property type="evidence" value="ECO:0000270"/>
    <property type="project" value="MGI"/>
</dbReference>
<dbReference type="GO" id="GO:0043542">
    <property type="term" value="P:endothelial cell migration"/>
    <property type="evidence" value="ECO:0000315"/>
    <property type="project" value="MGI"/>
</dbReference>
<dbReference type="GO" id="GO:0007219">
    <property type="term" value="P:Notch signaling pathway"/>
    <property type="evidence" value="ECO:0000314"/>
    <property type="project" value="MGI"/>
</dbReference>
<dbReference type="GO" id="GO:1904951">
    <property type="term" value="P:positive regulation of establishment of protein localization"/>
    <property type="evidence" value="ECO:0007669"/>
    <property type="project" value="Ensembl"/>
</dbReference>
<dbReference type="GO" id="GO:1901224">
    <property type="term" value="P:positive regulation of non-canonical NF-kappaB signal transduction"/>
    <property type="evidence" value="ECO:0007669"/>
    <property type="project" value="Ensembl"/>
</dbReference>
<dbReference type="GO" id="GO:0043117">
    <property type="term" value="P:positive regulation of vascular permeability"/>
    <property type="evidence" value="ECO:0000315"/>
    <property type="project" value="MGI"/>
</dbReference>
<dbReference type="GO" id="GO:0006355">
    <property type="term" value="P:regulation of DNA-templated transcription"/>
    <property type="evidence" value="ECO:0007669"/>
    <property type="project" value="Ensembl"/>
</dbReference>
<dbReference type="GO" id="GO:1900746">
    <property type="term" value="P:regulation of vascular endothelial growth factor signaling pathway"/>
    <property type="evidence" value="ECO:0000315"/>
    <property type="project" value="MGI"/>
</dbReference>
<dbReference type="FunFam" id="3.90.190.10:FF:000105">
    <property type="entry name" value="Protein tyrosine phosphatase type IVA 3"/>
    <property type="match status" value="1"/>
</dbReference>
<dbReference type="Gene3D" id="3.90.190.10">
    <property type="entry name" value="Protein tyrosine phosphatase superfamily"/>
    <property type="match status" value="1"/>
</dbReference>
<dbReference type="InterPro" id="IPR029021">
    <property type="entry name" value="Prot-tyrosine_phosphatase-like"/>
</dbReference>
<dbReference type="InterPro" id="IPR050561">
    <property type="entry name" value="PTP"/>
</dbReference>
<dbReference type="InterPro" id="IPR003595">
    <property type="entry name" value="Tyr_Pase_cat"/>
</dbReference>
<dbReference type="InterPro" id="IPR000387">
    <property type="entry name" value="Tyr_Pase_dom"/>
</dbReference>
<dbReference type="InterPro" id="IPR020422">
    <property type="entry name" value="TYR_PHOSPHATASE_DUAL_dom"/>
</dbReference>
<dbReference type="PANTHER" id="PTHR23339">
    <property type="entry name" value="TYROSINE SPECIFIC PROTEIN PHOSPHATASE AND DUAL SPECIFICITY PROTEIN PHOSPHATASE"/>
    <property type="match status" value="1"/>
</dbReference>
<dbReference type="Pfam" id="PF22785">
    <property type="entry name" value="Tc-R-P"/>
    <property type="match status" value="1"/>
</dbReference>
<dbReference type="SMART" id="SM00404">
    <property type="entry name" value="PTPc_motif"/>
    <property type="match status" value="1"/>
</dbReference>
<dbReference type="SUPFAM" id="SSF52799">
    <property type="entry name" value="(Phosphotyrosine protein) phosphatases II"/>
    <property type="match status" value="1"/>
</dbReference>
<dbReference type="PROSITE" id="PS50056">
    <property type="entry name" value="TYR_PHOSPHATASE_2"/>
    <property type="match status" value="1"/>
</dbReference>
<dbReference type="PROSITE" id="PS50054">
    <property type="entry name" value="TYR_PHOSPHATASE_DUAL"/>
    <property type="match status" value="1"/>
</dbReference>
<proteinExistence type="evidence at protein level"/>